<sequence length="296" mass="33042">MNKEQLEKMKNGKGFIAALDQSGGSTPKALKEYGVNEDQYSNEDEMFQLVHDMRTRVVTSPSFSPDKILGAILFEQTMDREVEGKYTADYLADKGVVPFLKVDKGLAEEQNGVQLMKPIDNLDSLLDRANERHIFGTKMRSNILELNEQGIKDVVEQQFEVAKQIIAKGLVPIIEPEVNINAKDKAEIEKVLKAELKKGLDSLNADQLVMLKLTIPTEPNLYKELAEHPNVVRVVVLSGGYSREKANELLKDNDELIASFSRALASDLRADQSKEEFDKALGDAVESIYDASVNKN</sequence>
<proteinExistence type="evidence at protein level"/>
<evidence type="ECO:0000250" key="1"/>
<evidence type="ECO:0000305" key="2"/>
<gene>
    <name type="primary">fda</name>
    <name type="ordered locus">SA2399</name>
</gene>
<dbReference type="EC" id="4.1.2.13"/>
<dbReference type="EMBL" id="BA000018">
    <property type="protein sequence ID" value="BAB43704.1"/>
    <property type="molecule type" value="Genomic_DNA"/>
</dbReference>
<dbReference type="PIR" id="F90067">
    <property type="entry name" value="F90067"/>
</dbReference>
<dbReference type="RefSeq" id="WP_001031409.1">
    <property type="nucleotide sequence ID" value="NC_002745.2"/>
</dbReference>
<dbReference type="SMR" id="P99117"/>
<dbReference type="EnsemblBacteria" id="BAB43704">
    <property type="protein sequence ID" value="BAB43704"/>
    <property type="gene ID" value="BAB43704"/>
</dbReference>
<dbReference type="KEGG" id="sau:SA2399"/>
<dbReference type="HOGENOM" id="CLU_081560_0_0_9"/>
<dbReference type="UniPathway" id="UPA00109">
    <property type="reaction ID" value="UER00183"/>
</dbReference>
<dbReference type="GO" id="GO:0004332">
    <property type="term" value="F:fructose-bisphosphate aldolase activity"/>
    <property type="evidence" value="ECO:0007669"/>
    <property type="project" value="UniProtKB-UniRule"/>
</dbReference>
<dbReference type="GO" id="GO:0006096">
    <property type="term" value="P:glycolytic process"/>
    <property type="evidence" value="ECO:0007669"/>
    <property type="project" value="UniProtKB-UniRule"/>
</dbReference>
<dbReference type="Gene3D" id="3.20.20.70">
    <property type="entry name" value="Aldolase class I"/>
    <property type="match status" value="1"/>
</dbReference>
<dbReference type="HAMAP" id="MF_00729">
    <property type="entry name" value="FBP_aldolase_1"/>
    <property type="match status" value="1"/>
</dbReference>
<dbReference type="InterPro" id="IPR013785">
    <property type="entry name" value="Aldolase_TIM"/>
</dbReference>
<dbReference type="InterPro" id="IPR000741">
    <property type="entry name" value="FBA_I"/>
</dbReference>
<dbReference type="InterPro" id="IPR023014">
    <property type="entry name" value="FBA_I_Gram+-type"/>
</dbReference>
<dbReference type="NCBIfam" id="NF003784">
    <property type="entry name" value="PRK05377.1"/>
    <property type="match status" value="1"/>
</dbReference>
<dbReference type="PANTHER" id="PTHR11627">
    <property type="entry name" value="FRUCTOSE-BISPHOSPHATE ALDOLASE"/>
    <property type="match status" value="1"/>
</dbReference>
<dbReference type="Pfam" id="PF00274">
    <property type="entry name" value="Glycolytic"/>
    <property type="match status" value="1"/>
</dbReference>
<dbReference type="SUPFAM" id="SSF51569">
    <property type="entry name" value="Aldolase"/>
    <property type="match status" value="1"/>
</dbReference>
<keyword id="KW-0324">Glycolysis</keyword>
<keyword id="KW-0456">Lyase</keyword>
<keyword id="KW-0704">Schiff base</keyword>
<protein>
    <recommendedName>
        <fullName>Fructose-bisphosphate aldolase class 1</fullName>
        <ecNumber>4.1.2.13</ecNumber>
    </recommendedName>
    <alternativeName>
        <fullName>Fructose-bisphosphate aldolase class I</fullName>
        <shortName>FBP aldolase</shortName>
    </alternativeName>
</protein>
<name>ALF1_STAAN</name>
<feature type="initiator methionine" description="Removed" evidence="1">
    <location>
        <position position="1"/>
    </location>
</feature>
<feature type="chain" id="PRO_0000216905" description="Fructose-bisphosphate aldolase class 1">
    <location>
        <begin position="2"/>
        <end position="296"/>
    </location>
</feature>
<feature type="active site" description="Proton acceptor" evidence="1">
    <location>
        <position position="175"/>
    </location>
</feature>
<feature type="active site" description="Schiff-base intermediate with dihydroxyacetone-P" evidence="1">
    <location>
        <position position="212"/>
    </location>
</feature>
<reference key="1">
    <citation type="journal article" date="2001" name="Lancet">
        <title>Whole genome sequencing of meticillin-resistant Staphylococcus aureus.</title>
        <authorList>
            <person name="Kuroda M."/>
            <person name="Ohta T."/>
            <person name="Uchiyama I."/>
            <person name="Baba T."/>
            <person name="Yuzawa H."/>
            <person name="Kobayashi I."/>
            <person name="Cui L."/>
            <person name="Oguchi A."/>
            <person name="Aoki K."/>
            <person name="Nagai Y."/>
            <person name="Lian J.-Q."/>
            <person name="Ito T."/>
            <person name="Kanamori M."/>
            <person name="Matsumaru H."/>
            <person name="Maruyama A."/>
            <person name="Murakami H."/>
            <person name="Hosoyama A."/>
            <person name="Mizutani-Ui Y."/>
            <person name="Takahashi N.K."/>
            <person name="Sawano T."/>
            <person name="Inoue R."/>
            <person name="Kaito C."/>
            <person name="Sekimizu K."/>
            <person name="Hirakawa H."/>
            <person name="Kuhara S."/>
            <person name="Goto S."/>
            <person name="Yabuzaki J."/>
            <person name="Kanehisa M."/>
            <person name="Yamashita A."/>
            <person name="Oshima K."/>
            <person name="Furuya K."/>
            <person name="Yoshino C."/>
            <person name="Shiba T."/>
            <person name="Hattori M."/>
            <person name="Ogasawara N."/>
            <person name="Hayashi H."/>
            <person name="Hiramatsu K."/>
        </authorList>
    </citation>
    <scope>NUCLEOTIDE SEQUENCE [LARGE SCALE GENOMIC DNA]</scope>
    <source>
        <strain>N315</strain>
    </source>
</reference>
<reference key="2">
    <citation type="journal article" date="2005" name="J. Microbiol. Methods">
        <title>Correlation of proteomic and transcriptomic profiles of Staphylococcus aureus during the post-exponential phase of growth.</title>
        <authorList>
            <person name="Scherl A."/>
            <person name="Francois P."/>
            <person name="Bento M."/>
            <person name="Deshusses J.M."/>
            <person name="Charbonnier Y."/>
            <person name="Converset V."/>
            <person name="Huyghe A."/>
            <person name="Walter N."/>
            <person name="Hoogland C."/>
            <person name="Appel R.D."/>
            <person name="Sanchez J.-C."/>
            <person name="Zimmermann-Ivol C.G."/>
            <person name="Corthals G.L."/>
            <person name="Hochstrasser D.F."/>
            <person name="Schrenzel J."/>
        </authorList>
    </citation>
    <scope>IDENTIFICATION BY MASS SPECTROMETRY</scope>
    <source>
        <strain>N315</strain>
    </source>
</reference>
<reference key="3">
    <citation type="submission" date="2007-10" db="UniProtKB">
        <title>Shotgun proteomic analysis of total and membrane protein extracts of S. aureus strain N315.</title>
        <authorList>
            <person name="Vaezzadeh A.R."/>
            <person name="Deshusses J."/>
            <person name="Lescuyer P."/>
            <person name="Hochstrasser D.F."/>
        </authorList>
    </citation>
    <scope>IDENTIFICATION BY MASS SPECTROMETRY [LARGE SCALE ANALYSIS]</scope>
    <source>
        <strain>N315</strain>
    </source>
</reference>
<accession>P99117</accession>
<accession>Q99R31</accession>
<organism>
    <name type="scientific">Staphylococcus aureus (strain N315)</name>
    <dbReference type="NCBI Taxonomy" id="158879"/>
    <lineage>
        <taxon>Bacteria</taxon>
        <taxon>Bacillati</taxon>
        <taxon>Bacillota</taxon>
        <taxon>Bacilli</taxon>
        <taxon>Bacillales</taxon>
        <taxon>Staphylococcaceae</taxon>
        <taxon>Staphylococcus</taxon>
    </lineage>
</organism>
<comment type="catalytic activity">
    <reaction>
        <text>beta-D-fructose 1,6-bisphosphate = D-glyceraldehyde 3-phosphate + dihydroxyacetone phosphate</text>
        <dbReference type="Rhea" id="RHEA:14729"/>
        <dbReference type="ChEBI" id="CHEBI:32966"/>
        <dbReference type="ChEBI" id="CHEBI:57642"/>
        <dbReference type="ChEBI" id="CHEBI:59776"/>
        <dbReference type="EC" id="4.1.2.13"/>
    </reaction>
</comment>
<comment type="pathway">
    <text>Carbohydrate degradation; glycolysis; D-glyceraldehyde 3-phosphate and glycerone phosphate from D-glucose: step 4/4.</text>
</comment>
<comment type="similarity">
    <text evidence="2">Belongs to the class I fructose-bisphosphate aldolase family.</text>
</comment>